<feature type="initiator methionine" description="Removed" evidence="3">
    <location>
        <position position="1"/>
    </location>
</feature>
<feature type="chain" id="PRO_0000191548" description="Sperm protamine P1">
    <location>
        <begin position="2"/>
        <end position="50"/>
    </location>
</feature>
<feature type="disulfide bond" description="Interchain (with C-22)" evidence="2">
    <location>
        <position position="6"/>
    </location>
</feature>
<feature type="disulfide bond" evidence="2">
    <location>
        <begin position="7"/>
        <end position="15"/>
    </location>
</feature>
<feature type="disulfide bond" description="Interchain (with C-6)" evidence="2">
    <location>
        <position position="22"/>
    </location>
</feature>
<feature type="disulfide bond" description="Interchain (with C-38)" evidence="2">
    <location>
        <position position="38"/>
    </location>
</feature>
<feature type="disulfide bond" evidence="2">
    <location>
        <begin position="39"/>
        <end position="47"/>
    </location>
</feature>
<keyword id="KW-0158">Chromosome</keyword>
<keyword id="KW-0217">Developmental protein</keyword>
<keyword id="KW-0221">Differentiation</keyword>
<keyword id="KW-0903">Direct protein sequencing</keyword>
<keyword id="KW-1015">Disulfide bond</keyword>
<keyword id="KW-0226">DNA condensation</keyword>
<keyword id="KW-0238">DNA-binding</keyword>
<keyword id="KW-0544">Nucleosome core</keyword>
<keyword id="KW-0539">Nucleus</keyword>
<keyword id="KW-1185">Reference proteome</keyword>
<keyword id="KW-0744">Spermatogenesis</keyword>
<comment type="function">
    <text>Protamines substitute for histones in the chromatin of sperm during the haploid phase of spermatogenesis. They compact sperm DNA into a highly condensed, stable and inactive complex.</text>
</comment>
<comment type="subunit">
    <text evidence="1">Cross-linked by interchain disulfide bonds around the DNA-helix.</text>
</comment>
<comment type="subcellular location">
    <subcellularLocation>
        <location>Nucleus</location>
    </subcellularLocation>
    <subcellularLocation>
        <location>Chromosome</location>
    </subcellularLocation>
</comment>
<comment type="tissue specificity">
    <text>Testis.</text>
</comment>
<comment type="similarity">
    <text evidence="4">Belongs to the protamine P1 family.</text>
</comment>
<organism>
    <name type="scientific">Oryctolagus cuniculus</name>
    <name type="common">Rabbit</name>
    <dbReference type="NCBI Taxonomy" id="9986"/>
    <lineage>
        <taxon>Eukaryota</taxon>
        <taxon>Metazoa</taxon>
        <taxon>Chordata</taxon>
        <taxon>Craniata</taxon>
        <taxon>Vertebrata</taxon>
        <taxon>Euteleostomi</taxon>
        <taxon>Mammalia</taxon>
        <taxon>Eutheria</taxon>
        <taxon>Euarchontoglires</taxon>
        <taxon>Glires</taxon>
        <taxon>Lagomorpha</taxon>
        <taxon>Leporidae</taxon>
        <taxon>Oryctolagus</taxon>
    </lineage>
</organism>
<accession>P10119</accession>
<name>HSP1_RABIT</name>
<proteinExistence type="evidence at protein level"/>
<protein>
    <recommendedName>
        <fullName>Sperm protamine P1</fullName>
    </recommendedName>
    <alternativeName>
        <fullName>Cysteine-rich protamine</fullName>
    </alternativeName>
</protein>
<dbReference type="PIR" id="S02007">
    <property type="entry name" value="S02007"/>
</dbReference>
<dbReference type="STRING" id="9986.ENSOCUP00000016607"/>
<dbReference type="PaxDb" id="9986-ENSOCUP00000016607"/>
<dbReference type="Ensembl" id="ENSOCUT00000029676.1">
    <property type="protein sequence ID" value="ENSOCUP00000016607.1"/>
    <property type="gene ID" value="ENSOCUG00000021894.1"/>
</dbReference>
<dbReference type="GeneTree" id="ENSGT00950000184850"/>
<dbReference type="HOGENOM" id="CLU_214580_2_0_1"/>
<dbReference type="InParanoid" id="P10119"/>
<dbReference type="OMA" id="MARYICC"/>
<dbReference type="Proteomes" id="UP000001811">
    <property type="component" value="Chromosome 6"/>
</dbReference>
<dbReference type="Bgee" id="ENSOCUG00000021894">
    <property type="expression patterns" value="Expressed in blood and 10 other cell types or tissues"/>
</dbReference>
<dbReference type="GO" id="GO:0005829">
    <property type="term" value="C:cytosol"/>
    <property type="evidence" value="ECO:0007669"/>
    <property type="project" value="Ensembl"/>
</dbReference>
<dbReference type="GO" id="GO:0005654">
    <property type="term" value="C:nucleoplasm"/>
    <property type="evidence" value="ECO:0007669"/>
    <property type="project" value="Ensembl"/>
</dbReference>
<dbReference type="GO" id="GO:0000786">
    <property type="term" value="C:nucleosome"/>
    <property type="evidence" value="ECO:0007669"/>
    <property type="project" value="UniProtKB-KW"/>
</dbReference>
<dbReference type="GO" id="GO:0003677">
    <property type="term" value="F:DNA binding"/>
    <property type="evidence" value="ECO:0007669"/>
    <property type="project" value="UniProtKB-KW"/>
</dbReference>
<dbReference type="GO" id="GO:0030261">
    <property type="term" value="P:chromosome condensation"/>
    <property type="evidence" value="ECO:0007669"/>
    <property type="project" value="UniProtKB-KW"/>
</dbReference>
<dbReference type="GO" id="GO:0035092">
    <property type="term" value="P:sperm DNA condensation"/>
    <property type="evidence" value="ECO:0007669"/>
    <property type="project" value="InterPro"/>
</dbReference>
<dbReference type="InterPro" id="IPR000221">
    <property type="entry name" value="Protamine_P1"/>
</dbReference>
<dbReference type="Pfam" id="PF00260">
    <property type="entry name" value="Protamine_P1"/>
    <property type="match status" value="1"/>
</dbReference>
<dbReference type="PROSITE" id="PS00048">
    <property type="entry name" value="PROTAMINE_P1"/>
    <property type="match status" value="1"/>
</dbReference>
<gene>
    <name type="primary">PRM1</name>
    <name type="synonym">PRM-1</name>
</gene>
<evidence type="ECO:0000250" key="1"/>
<evidence type="ECO:0000250" key="2">
    <source>
        <dbReference type="UniProtKB" id="P02318"/>
    </source>
</evidence>
<evidence type="ECO:0000269" key="3">
    <source>
    </source>
</evidence>
<evidence type="ECO:0000305" key="4"/>
<sequence>MVRYRCCRSQSRSRCRRRRRRCRRRRRRCCQRRRVRKCCRRTYTLRCRRY</sequence>
<reference key="1">
    <citation type="journal article" date="1988" name="FEBS Lett.">
        <title>Primary structure of rabbit sperm protamine, the first protamine of its type with an aberrant N-terminal.</title>
        <authorList>
            <person name="Ammer H."/>
            <person name="Henschen A."/>
        </authorList>
    </citation>
    <scope>PROTEIN SEQUENCE OF 2-50</scope>
</reference>